<organism>
    <name type="scientific">Histophilus somni (strain 129Pt)</name>
    <name type="common">Haemophilus somnus</name>
    <dbReference type="NCBI Taxonomy" id="205914"/>
    <lineage>
        <taxon>Bacteria</taxon>
        <taxon>Pseudomonadati</taxon>
        <taxon>Pseudomonadota</taxon>
        <taxon>Gammaproteobacteria</taxon>
        <taxon>Pasteurellales</taxon>
        <taxon>Pasteurellaceae</taxon>
        <taxon>Histophilus</taxon>
    </lineage>
</organism>
<accession>Q0I4C6</accession>
<feature type="chain" id="PRO_0000366763" description="Ribosomal RNA large subunit methyltransferase K/L">
    <location>
        <begin position="1"/>
        <end position="718"/>
    </location>
</feature>
<feature type="domain" description="THUMP" evidence="1">
    <location>
        <begin position="43"/>
        <end position="154"/>
    </location>
</feature>
<evidence type="ECO:0000255" key="1">
    <source>
        <dbReference type="HAMAP-Rule" id="MF_01858"/>
    </source>
</evidence>
<protein>
    <recommendedName>
        <fullName evidence="1">Ribosomal RNA large subunit methyltransferase K/L</fullName>
    </recommendedName>
    <domain>
        <recommendedName>
            <fullName evidence="1">23S rRNA m2G2445 methyltransferase</fullName>
            <ecNumber evidence="1">2.1.1.173</ecNumber>
        </recommendedName>
        <alternativeName>
            <fullName evidence="1">rRNA (guanine-N(2)-)-methyltransferase RlmL</fullName>
        </alternativeName>
    </domain>
    <domain>
        <recommendedName>
            <fullName evidence="1">23S rRNA m7G2069 methyltransferase</fullName>
            <ecNumber evidence="1">2.1.1.264</ecNumber>
        </recommendedName>
        <alternativeName>
            <fullName evidence="1">rRNA (guanine-N(7)-)-methyltransferase RlmK</fullName>
        </alternativeName>
    </domain>
</protein>
<gene>
    <name evidence="1" type="primary">rlmL</name>
    <name type="ordered locus">HS_1020</name>
</gene>
<name>RLMKL_HISS1</name>
<dbReference type="EC" id="2.1.1.173" evidence="1"/>
<dbReference type="EC" id="2.1.1.264" evidence="1"/>
<dbReference type="EMBL" id="CP000436">
    <property type="protein sequence ID" value="ABI25295.1"/>
    <property type="molecule type" value="Genomic_DNA"/>
</dbReference>
<dbReference type="SMR" id="Q0I4C6"/>
<dbReference type="KEGG" id="hso:HS_1020"/>
<dbReference type="eggNOG" id="COG0116">
    <property type="taxonomic scope" value="Bacteria"/>
</dbReference>
<dbReference type="eggNOG" id="COG1092">
    <property type="taxonomic scope" value="Bacteria"/>
</dbReference>
<dbReference type="HOGENOM" id="CLU_014042_2_0_6"/>
<dbReference type="GO" id="GO:0005737">
    <property type="term" value="C:cytoplasm"/>
    <property type="evidence" value="ECO:0007669"/>
    <property type="project" value="UniProtKB-SubCell"/>
</dbReference>
<dbReference type="GO" id="GO:0052915">
    <property type="term" value="F:23S rRNA (guanine(2445)-N(2))-methyltransferase activity"/>
    <property type="evidence" value="ECO:0007669"/>
    <property type="project" value="UniProtKB-UniRule"/>
</dbReference>
<dbReference type="GO" id="GO:0003723">
    <property type="term" value="F:RNA binding"/>
    <property type="evidence" value="ECO:0007669"/>
    <property type="project" value="UniProtKB-KW"/>
</dbReference>
<dbReference type="GO" id="GO:0070043">
    <property type="term" value="F:rRNA (guanine-N7-)-methyltransferase activity"/>
    <property type="evidence" value="ECO:0007669"/>
    <property type="project" value="UniProtKB-UniRule"/>
</dbReference>
<dbReference type="CDD" id="cd02440">
    <property type="entry name" value="AdoMet_MTases"/>
    <property type="match status" value="1"/>
</dbReference>
<dbReference type="CDD" id="cd11715">
    <property type="entry name" value="THUMP_AdoMetMT"/>
    <property type="match status" value="1"/>
</dbReference>
<dbReference type="FunFam" id="3.30.750.80:FF:000001">
    <property type="entry name" value="Ribosomal RNA large subunit methyltransferase K/L"/>
    <property type="match status" value="1"/>
</dbReference>
<dbReference type="FunFam" id="3.40.50.150:FF:000039">
    <property type="entry name" value="Ribosomal RNA large subunit methyltransferase K/L"/>
    <property type="match status" value="1"/>
</dbReference>
<dbReference type="Gene3D" id="3.30.2130.30">
    <property type="match status" value="1"/>
</dbReference>
<dbReference type="Gene3D" id="3.30.750.80">
    <property type="entry name" value="RNA methyltransferase domain (HRMD) like"/>
    <property type="match status" value="1"/>
</dbReference>
<dbReference type="Gene3D" id="3.40.50.150">
    <property type="entry name" value="Vaccinia Virus protein VP39"/>
    <property type="match status" value="2"/>
</dbReference>
<dbReference type="HAMAP" id="MF_01858">
    <property type="entry name" value="23SrRNA_methyltr_KL"/>
    <property type="match status" value="1"/>
</dbReference>
<dbReference type="InterPro" id="IPR017244">
    <property type="entry name" value="23SrRNA_methyltr_KL"/>
</dbReference>
<dbReference type="InterPro" id="IPR002052">
    <property type="entry name" value="DNA_methylase_N6_adenine_CS"/>
</dbReference>
<dbReference type="InterPro" id="IPR000241">
    <property type="entry name" value="RlmKL-like_Mtase"/>
</dbReference>
<dbReference type="InterPro" id="IPR053943">
    <property type="entry name" value="RlmKL-like_Mtase_CS"/>
</dbReference>
<dbReference type="InterPro" id="IPR054170">
    <property type="entry name" value="RlmL_1st"/>
</dbReference>
<dbReference type="InterPro" id="IPR019614">
    <property type="entry name" value="SAM-dep_methyl-trfase"/>
</dbReference>
<dbReference type="InterPro" id="IPR029063">
    <property type="entry name" value="SAM-dependent_MTases_sf"/>
</dbReference>
<dbReference type="InterPro" id="IPR004114">
    <property type="entry name" value="THUMP_dom"/>
</dbReference>
<dbReference type="NCBIfam" id="NF008748">
    <property type="entry name" value="PRK11783.1"/>
    <property type="match status" value="1"/>
</dbReference>
<dbReference type="PANTHER" id="PTHR47313">
    <property type="entry name" value="RIBOSOMAL RNA LARGE SUBUNIT METHYLTRANSFERASE K/L"/>
    <property type="match status" value="1"/>
</dbReference>
<dbReference type="PANTHER" id="PTHR47313:SF1">
    <property type="entry name" value="RIBOSOMAL RNA LARGE SUBUNIT METHYLTRANSFERASE K_L"/>
    <property type="match status" value="1"/>
</dbReference>
<dbReference type="Pfam" id="PF10672">
    <property type="entry name" value="Methyltrans_SAM"/>
    <property type="match status" value="1"/>
</dbReference>
<dbReference type="Pfam" id="PF22020">
    <property type="entry name" value="RlmL_1st"/>
    <property type="match status" value="1"/>
</dbReference>
<dbReference type="Pfam" id="PF02926">
    <property type="entry name" value="THUMP"/>
    <property type="match status" value="1"/>
</dbReference>
<dbReference type="Pfam" id="PF01170">
    <property type="entry name" value="UPF0020"/>
    <property type="match status" value="1"/>
</dbReference>
<dbReference type="PIRSF" id="PIRSF037618">
    <property type="entry name" value="RNA_Mtase_bacteria_prd"/>
    <property type="match status" value="1"/>
</dbReference>
<dbReference type="SMART" id="SM00981">
    <property type="entry name" value="THUMP"/>
    <property type="match status" value="1"/>
</dbReference>
<dbReference type="SUPFAM" id="SSF53335">
    <property type="entry name" value="S-adenosyl-L-methionine-dependent methyltransferases"/>
    <property type="match status" value="2"/>
</dbReference>
<dbReference type="PROSITE" id="PS51165">
    <property type="entry name" value="THUMP"/>
    <property type="match status" value="1"/>
</dbReference>
<dbReference type="PROSITE" id="PS01261">
    <property type="entry name" value="UPF0020"/>
    <property type="match status" value="1"/>
</dbReference>
<keyword id="KW-0963">Cytoplasm</keyword>
<keyword id="KW-0489">Methyltransferase</keyword>
<keyword id="KW-0694">RNA-binding</keyword>
<keyword id="KW-0698">rRNA processing</keyword>
<keyword id="KW-0949">S-adenosyl-L-methionine</keyword>
<keyword id="KW-0808">Transferase</keyword>
<sequence length="718" mass="82343">MKQLFATTSRGFEELLKVELTDLGAQECRVVQGGVHFIANDETQYRILLWSRLSSRILLPLITTKIYSDLDLYSAIVGQNWLTHFDERVTFLVDFNGTNREIRHTQFGAMRVKDGIVDYFERHGKTRPNVDKEYPDIRIHAYLNQDELVVSLDLSGEALHLRGYREDTGKAPLRETLAAAIVLRSSWEKGTPLVDPMCGSGTLLIEAAQMEAQIAPQLHRLHWGFDFWKGHNQVVWEKVKQEAVELAEQAFNRKLTPHFWGFDLDHRVLKKAQKNAQNAGVSHLIKWQQGDVAGLKNPTEQEIGTVICNPPYGERLGTTPALIALYSVFGRQLKTEFADWNVSIFSGEPALLDCLRLRAYRQFKAKNGPLDCVQKNYHIAVRKQVESAVENSQEKTLTFVSENTQVAQDFANRLRKNIKKIDKWANQQKLDAYRLYDADLPEYNLAVDRYADHIIVQEYAAPKNVDENKARQRLLDAVSAILLVTGIETNKLILKVRQKQKGTSQYEKLANKGEYFYVHEYGAKLWVNLTDYLDTGLFLDHRLTRKMLGEMAVGKDFLNLFAYTGSATVHAALGLAKSTTTVDMSNTYLNWAEQNLLLNDIEGKQHKLIQADCLQWLNKCDRQFDLIFVDPPTFSNSKRMEDSWDVQRDHIKLMANLKRILRTNGTIVFSNNKRGFKMDIDGLQELELSAVEISAKTLPLDFERNKQIHNCWIIRHQS</sequence>
<proteinExistence type="inferred from homology"/>
<reference key="1">
    <citation type="journal article" date="2007" name="J. Bacteriol.">
        <title>Complete genome sequence of Haemophilus somnus (Histophilus somni) strain 129Pt and comparison to Haemophilus ducreyi 35000HP and Haemophilus influenzae Rd.</title>
        <authorList>
            <person name="Challacombe J.F."/>
            <person name="Duncan A.J."/>
            <person name="Brettin T.S."/>
            <person name="Bruce D."/>
            <person name="Chertkov O."/>
            <person name="Detter J.C."/>
            <person name="Han C.S."/>
            <person name="Misra M."/>
            <person name="Richardson P."/>
            <person name="Tapia R."/>
            <person name="Thayer N."/>
            <person name="Xie G."/>
            <person name="Inzana T.J."/>
        </authorList>
    </citation>
    <scope>NUCLEOTIDE SEQUENCE [LARGE SCALE GENOMIC DNA]</scope>
    <source>
        <strain>129Pt</strain>
    </source>
</reference>
<comment type="function">
    <text evidence="1">Specifically methylates the guanine in position 2445 (m2G2445) and the guanine in position 2069 (m7G2069) of 23S rRNA.</text>
</comment>
<comment type="catalytic activity">
    <reaction evidence="1">
        <text>guanosine(2445) in 23S rRNA + S-adenosyl-L-methionine = N(2)-methylguanosine(2445) in 23S rRNA + S-adenosyl-L-homocysteine + H(+)</text>
        <dbReference type="Rhea" id="RHEA:42740"/>
        <dbReference type="Rhea" id="RHEA-COMP:10215"/>
        <dbReference type="Rhea" id="RHEA-COMP:10216"/>
        <dbReference type="ChEBI" id="CHEBI:15378"/>
        <dbReference type="ChEBI" id="CHEBI:57856"/>
        <dbReference type="ChEBI" id="CHEBI:59789"/>
        <dbReference type="ChEBI" id="CHEBI:74269"/>
        <dbReference type="ChEBI" id="CHEBI:74481"/>
        <dbReference type="EC" id="2.1.1.173"/>
    </reaction>
</comment>
<comment type="catalytic activity">
    <reaction evidence="1">
        <text>guanosine(2069) in 23S rRNA + S-adenosyl-L-methionine = N(2)-methylguanosine(2069) in 23S rRNA + S-adenosyl-L-homocysteine + H(+)</text>
        <dbReference type="Rhea" id="RHEA:43772"/>
        <dbReference type="Rhea" id="RHEA-COMP:10688"/>
        <dbReference type="Rhea" id="RHEA-COMP:10689"/>
        <dbReference type="ChEBI" id="CHEBI:15378"/>
        <dbReference type="ChEBI" id="CHEBI:57856"/>
        <dbReference type="ChEBI" id="CHEBI:59789"/>
        <dbReference type="ChEBI" id="CHEBI:74269"/>
        <dbReference type="ChEBI" id="CHEBI:74481"/>
        <dbReference type="EC" id="2.1.1.264"/>
    </reaction>
</comment>
<comment type="subcellular location">
    <subcellularLocation>
        <location evidence="1">Cytoplasm</location>
    </subcellularLocation>
</comment>
<comment type="similarity">
    <text evidence="1">Belongs to the methyltransferase superfamily. RlmKL family.</text>
</comment>